<gene>
    <name evidence="1" type="primary">mdoG</name>
    <name evidence="1" type="synonym">opgG</name>
    <name type="ordered locus">ECSE_1112</name>
</gene>
<evidence type="ECO:0000255" key="1">
    <source>
        <dbReference type="HAMAP-Rule" id="MF_01069"/>
    </source>
</evidence>
<dbReference type="EMBL" id="AP009240">
    <property type="protein sequence ID" value="BAG76636.1"/>
    <property type="molecule type" value="Genomic_DNA"/>
</dbReference>
<dbReference type="RefSeq" id="WP_001300662.1">
    <property type="nucleotide sequence ID" value="NC_011415.1"/>
</dbReference>
<dbReference type="SMR" id="B6I9C6"/>
<dbReference type="GeneID" id="93776366"/>
<dbReference type="KEGG" id="ecy:ECSE_1112"/>
<dbReference type="HOGENOM" id="CLU_023403_2_0_6"/>
<dbReference type="UniPathway" id="UPA00637"/>
<dbReference type="Proteomes" id="UP000008199">
    <property type="component" value="Chromosome"/>
</dbReference>
<dbReference type="GO" id="GO:0030288">
    <property type="term" value="C:outer membrane-bounded periplasmic space"/>
    <property type="evidence" value="ECO:0007669"/>
    <property type="project" value="TreeGrafter"/>
</dbReference>
<dbReference type="GO" id="GO:0030246">
    <property type="term" value="F:carbohydrate binding"/>
    <property type="evidence" value="ECO:0007669"/>
    <property type="project" value="InterPro"/>
</dbReference>
<dbReference type="GO" id="GO:0003824">
    <property type="term" value="F:catalytic activity"/>
    <property type="evidence" value="ECO:0007669"/>
    <property type="project" value="InterPro"/>
</dbReference>
<dbReference type="GO" id="GO:0051274">
    <property type="term" value="P:beta-glucan biosynthetic process"/>
    <property type="evidence" value="ECO:0007669"/>
    <property type="project" value="TreeGrafter"/>
</dbReference>
<dbReference type="FunFam" id="2.60.40.10:FF:000294">
    <property type="entry name" value="Glucans biosynthesis protein G"/>
    <property type="match status" value="1"/>
</dbReference>
<dbReference type="FunFam" id="2.70.98.10:FF:000001">
    <property type="entry name" value="Glucans biosynthesis protein G"/>
    <property type="match status" value="1"/>
</dbReference>
<dbReference type="Gene3D" id="2.70.98.10">
    <property type="match status" value="1"/>
</dbReference>
<dbReference type="Gene3D" id="2.60.40.10">
    <property type="entry name" value="Immunoglobulins"/>
    <property type="match status" value="1"/>
</dbReference>
<dbReference type="HAMAP" id="MF_01069">
    <property type="entry name" value="MdoG_OpgG"/>
    <property type="match status" value="1"/>
</dbReference>
<dbReference type="InterPro" id="IPR011013">
    <property type="entry name" value="Gal_mutarotase_sf_dom"/>
</dbReference>
<dbReference type="InterPro" id="IPR014718">
    <property type="entry name" value="GH-type_carb-bd"/>
</dbReference>
<dbReference type="InterPro" id="IPR014438">
    <property type="entry name" value="Glucan_biosyn_MdoG/MdoD"/>
</dbReference>
<dbReference type="InterPro" id="IPR007444">
    <property type="entry name" value="Glucan_biosyn_MdoG_C"/>
</dbReference>
<dbReference type="InterPro" id="IPR013783">
    <property type="entry name" value="Ig-like_fold"/>
</dbReference>
<dbReference type="InterPro" id="IPR014756">
    <property type="entry name" value="Ig_E-set"/>
</dbReference>
<dbReference type="InterPro" id="IPR023704">
    <property type="entry name" value="MdoG_OpgG"/>
</dbReference>
<dbReference type="PANTHER" id="PTHR30504">
    <property type="entry name" value="GLUCANS BIOSYNTHESIS PROTEIN"/>
    <property type="match status" value="1"/>
</dbReference>
<dbReference type="PANTHER" id="PTHR30504:SF4">
    <property type="entry name" value="GLUCANS BIOSYNTHESIS PROTEIN G"/>
    <property type="match status" value="1"/>
</dbReference>
<dbReference type="Pfam" id="PF04349">
    <property type="entry name" value="MdoG"/>
    <property type="match status" value="1"/>
</dbReference>
<dbReference type="PIRSF" id="PIRSF006281">
    <property type="entry name" value="MdoG"/>
    <property type="match status" value="1"/>
</dbReference>
<dbReference type="SUPFAM" id="SSF81296">
    <property type="entry name" value="E set domains"/>
    <property type="match status" value="1"/>
</dbReference>
<dbReference type="SUPFAM" id="SSF74650">
    <property type="entry name" value="Galactose mutarotase-like"/>
    <property type="match status" value="1"/>
</dbReference>
<protein>
    <recommendedName>
        <fullName evidence="1">Glucans biosynthesis protein G</fullName>
    </recommendedName>
</protein>
<reference key="1">
    <citation type="journal article" date="2008" name="DNA Res.">
        <title>Complete genome sequence and comparative analysis of the wild-type commensal Escherichia coli strain SE11 isolated from a healthy adult.</title>
        <authorList>
            <person name="Oshima K."/>
            <person name="Toh H."/>
            <person name="Ogura Y."/>
            <person name="Sasamoto H."/>
            <person name="Morita H."/>
            <person name="Park S.-H."/>
            <person name="Ooka T."/>
            <person name="Iyoda S."/>
            <person name="Taylor T.D."/>
            <person name="Hayashi T."/>
            <person name="Itoh K."/>
            <person name="Hattori M."/>
        </authorList>
    </citation>
    <scope>NUCLEOTIDE SEQUENCE [LARGE SCALE GENOMIC DNA]</scope>
    <source>
        <strain>SE11</strain>
    </source>
</reference>
<sequence length="511" mass="57882">MMKMRWLSAAVMLTLYTSSSWAFSIDDVAKQAQSLAGKGYEAPKSNLPSVFRDMKYADYQQIQFNHDKAYWNNLKTPFKLEFYHQGMYFDTPVKINEVTATAVKRIKYSPDYFTFGDVQHDKDTVKDLGFAGFKVLYPINSKDKNDEIVSMLGASYFRVIGAGQVYGLSARGLAIDTALPSGEEFPRFKEFWIERPKPTDKRLTIYALLDSPRATGAYKFVVMPGRDTVVDVQSKIYLRDKVGKLGVAPLTSMFLFGPNQPSPANNYRPELHDSNGLSIHAGNGEWIWRPLNNPKHLAVSSFSMENPQGFGLLQRGRDFSRFEDLDDRYDLRPSAWVTPKGEWGKGSVELVEIPTNDETNDNIVAYWTPDQLPEPGKEMNFKYTITFSRDEDKLHAPDNAWVQQTRRSTGDVKQSNLIRQPDGTIAFVVDFTGAEMKKLPEDTPVTAQTSIGDNGEIVESTVRYNPVTKGWRLVMRVKVKDAKKTTEMRAALVNADQTLSETWSYQLPANE</sequence>
<comment type="function">
    <text evidence="1">Involved in the biosynthesis of osmoregulated periplasmic glucans (OPGs).</text>
</comment>
<comment type="pathway">
    <text evidence="1">Glycan metabolism; osmoregulated periplasmic glucan (OPG) biosynthesis.</text>
</comment>
<comment type="subcellular location">
    <subcellularLocation>
        <location evidence="1">Periplasm</location>
    </subcellularLocation>
</comment>
<comment type="similarity">
    <text evidence="1">Belongs to the OpgD/OpgG family.</text>
</comment>
<keyword id="KW-0574">Periplasm</keyword>
<keyword id="KW-0732">Signal</keyword>
<organism>
    <name type="scientific">Escherichia coli (strain SE11)</name>
    <dbReference type="NCBI Taxonomy" id="409438"/>
    <lineage>
        <taxon>Bacteria</taxon>
        <taxon>Pseudomonadati</taxon>
        <taxon>Pseudomonadota</taxon>
        <taxon>Gammaproteobacteria</taxon>
        <taxon>Enterobacterales</taxon>
        <taxon>Enterobacteriaceae</taxon>
        <taxon>Escherichia</taxon>
    </lineage>
</organism>
<proteinExistence type="inferred from homology"/>
<name>OPGG_ECOSE</name>
<accession>B6I9C6</accession>
<feature type="signal peptide" evidence="1">
    <location>
        <begin position="1"/>
        <end position="22"/>
    </location>
</feature>
<feature type="chain" id="PRO_1000136613" description="Glucans biosynthesis protein G">
    <location>
        <begin position="23"/>
        <end position="511"/>
    </location>
</feature>